<name>IES5_YEAST</name>
<proteinExistence type="evidence at protein level"/>
<comment type="subunit">
    <text evidence="1">Component of the chromatin-remodeling INO80 complex, at least composed of ARP4, ARP5, ARP8, RVB1, RVB2, TAF14, NHP10, IES1, IES3, IES4, IES6, ACT1, IES2, IES5 and INO80.</text>
</comment>
<comment type="interaction">
    <interactant intactId="EBI-22617">
        <id>P40060</id>
    </interactant>
    <interactant intactId="EBI-12010">
        <id>Q03435</id>
        <label>NHP10</label>
    </interactant>
    <organismsDiffer>false</organismsDiffer>
    <experiments>5</experiments>
</comment>
<comment type="subcellular location">
    <subcellularLocation>
        <location evidence="2">Nucleus</location>
    </subcellularLocation>
</comment>
<comment type="miscellaneous">
    <text evidence="3">Present with 2280 molecules/cell in log phase SD medium.</text>
</comment>
<organism>
    <name type="scientific">Saccharomyces cerevisiae (strain ATCC 204508 / S288c)</name>
    <name type="common">Baker's yeast</name>
    <dbReference type="NCBI Taxonomy" id="559292"/>
    <lineage>
        <taxon>Eukaryota</taxon>
        <taxon>Fungi</taxon>
        <taxon>Dikarya</taxon>
        <taxon>Ascomycota</taxon>
        <taxon>Saccharomycotina</taxon>
        <taxon>Saccharomycetes</taxon>
        <taxon>Saccharomycetales</taxon>
        <taxon>Saccharomycetaceae</taxon>
        <taxon>Saccharomyces</taxon>
    </lineage>
</organism>
<keyword id="KW-0539">Nucleus</keyword>
<keyword id="KW-0597">Phosphoprotein</keyword>
<keyword id="KW-1185">Reference proteome</keyword>
<accession>P40060</accession>
<accession>D3DLZ9</accession>
<dbReference type="EMBL" id="U32508">
    <property type="protein sequence ID" value="AAB60299.1"/>
    <property type="molecule type" value="Genomic_DNA"/>
</dbReference>
<dbReference type="EMBL" id="U18839">
    <property type="protein sequence ID" value="AAB64647.1"/>
    <property type="molecule type" value="Genomic_DNA"/>
</dbReference>
<dbReference type="EMBL" id="BK006939">
    <property type="protein sequence ID" value="DAA07753.1"/>
    <property type="molecule type" value="Genomic_DNA"/>
</dbReference>
<dbReference type="PIR" id="S50595">
    <property type="entry name" value="S50595"/>
</dbReference>
<dbReference type="RefSeq" id="NP_011017.3">
    <property type="nucleotide sequence ID" value="NM_001178983.3"/>
</dbReference>
<dbReference type="SMR" id="P40060"/>
<dbReference type="BioGRID" id="36837">
    <property type="interactions" value="475"/>
</dbReference>
<dbReference type="ComplexPortal" id="CPX-863">
    <property type="entry name" value="INO80 chromatin remodeling complex"/>
</dbReference>
<dbReference type="DIP" id="DIP-1468N"/>
<dbReference type="FunCoup" id="P40060">
    <property type="interactions" value="135"/>
</dbReference>
<dbReference type="IntAct" id="P40060">
    <property type="interactions" value="26"/>
</dbReference>
<dbReference type="MINT" id="P40060"/>
<dbReference type="STRING" id="4932.YER092W"/>
<dbReference type="iPTMnet" id="P40060"/>
<dbReference type="PaxDb" id="4932-YER092W"/>
<dbReference type="PeptideAtlas" id="P40060"/>
<dbReference type="EnsemblFungi" id="YER092W_mRNA">
    <property type="protein sequence ID" value="YER092W"/>
    <property type="gene ID" value="YER092W"/>
</dbReference>
<dbReference type="GeneID" id="856827"/>
<dbReference type="KEGG" id="sce:YER092W"/>
<dbReference type="AGR" id="SGD:S000000894"/>
<dbReference type="SGD" id="S000000894">
    <property type="gene designation" value="IES5"/>
</dbReference>
<dbReference type="VEuPathDB" id="FungiDB:YER092W"/>
<dbReference type="eggNOG" id="ENOG502S9CX">
    <property type="taxonomic scope" value="Eukaryota"/>
</dbReference>
<dbReference type="HOGENOM" id="CLU_163517_0_0_1"/>
<dbReference type="InParanoid" id="P40060"/>
<dbReference type="OMA" id="HSYELFR"/>
<dbReference type="OrthoDB" id="4033270at2759"/>
<dbReference type="BioCyc" id="YEAST:G3O-30259-MONOMER"/>
<dbReference type="BioGRID-ORCS" id="856827">
    <property type="hits" value="0 hits in 10 CRISPR screens"/>
</dbReference>
<dbReference type="PRO" id="PR:P40060"/>
<dbReference type="Proteomes" id="UP000002311">
    <property type="component" value="Chromosome V"/>
</dbReference>
<dbReference type="RNAct" id="P40060">
    <property type="molecule type" value="protein"/>
</dbReference>
<dbReference type="GO" id="GO:0031011">
    <property type="term" value="C:Ino80 complex"/>
    <property type="evidence" value="ECO:0000353"/>
    <property type="project" value="ComplexPortal"/>
</dbReference>
<dbReference type="GO" id="GO:0005634">
    <property type="term" value="C:nucleus"/>
    <property type="evidence" value="ECO:0000314"/>
    <property type="project" value="ComplexPortal"/>
</dbReference>
<dbReference type="GO" id="GO:0006338">
    <property type="term" value="P:chromatin remodeling"/>
    <property type="evidence" value="ECO:0000314"/>
    <property type="project" value="ComplexPortal"/>
</dbReference>
<dbReference type="GO" id="GO:0006281">
    <property type="term" value="P:DNA repair"/>
    <property type="evidence" value="ECO:0000303"/>
    <property type="project" value="ComplexPortal"/>
</dbReference>
<dbReference type="GO" id="GO:0006355">
    <property type="term" value="P:regulation of DNA-templated transcription"/>
    <property type="evidence" value="ECO:0000303"/>
    <property type="project" value="ComplexPortal"/>
</dbReference>
<dbReference type="GO" id="GO:0000722">
    <property type="term" value="P:telomere maintenance via recombination"/>
    <property type="evidence" value="ECO:0000316"/>
    <property type="project" value="SGD"/>
</dbReference>
<dbReference type="InterPro" id="IPR020366">
    <property type="entry name" value="Ies5"/>
</dbReference>
<dbReference type="Pfam" id="PF17335">
    <property type="entry name" value="IES5"/>
    <property type="match status" value="1"/>
</dbReference>
<reference key="1">
    <citation type="submission" date="1995-10" db="EMBL/GenBank/DDBJ databases">
        <authorList>
            <person name="Korch C."/>
            <person name="Mountain H.A."/>
            <person name="Wenzlau J.M."/>
        </authorList>
    </citation>
    <scope>NUCLEOTIDE SEQUENCE [GENOMIC DNA]</scope>
    <source>
        <strain>ATCC 204508 / S288c</strain>
    </source>
</reference>
<reference key="2">
    <citation type="journal article" date="1997" name="Nature">
        <title>The nucleotide sequence of Saccharomyces cerevisiae chromosome V.</title>
        <authorList>
            <person name="Dietrich F.S."/>
            <person name="Mulligan J.T."/>
            <person name="Hennessy K.M."/>
            <person name="Yelton M.A."/>
            <person name="Allen E."/>
            <person name="Araujo R."/>
            <person name="Aviles E."/>
            <person name="Berno A."/>
            <person name="Brennan T."/>
            <person name="Carpenter J."/>
            <person name="Chen E."/>
            <person name="Cherry J.M."/>
            <person name="Chung E."/>
            <person name="Duncan M."/>
            <person name="Guzman E."/>
            <person name="Hartzell G."/>
            <person name="Hunicke-Smith S."/>
            <person name="Hyman R.W."/>
            <person name="Kayser A."/>
            <person name="Komp C."/>
            <person name="Lashkari D."/>
            <person name="Lew H."/>
            <person name="Lin D."/>
            <person name="Mosedale D."/>
            <person name="Nakahara K."/>
            <person name="Namath A."/>
            <person name="Norgren R."/>
            <person name="Oefner P."/>
            <person name="Oh C."/>
            <person name="Petel F.X."/>
            <person name="Roberts D."/>
            <person name="Sehl P."/>
            <person name="Schramm S."/>
            <person name="Shogren T."/>
            <person name="Smith V."/>
            <person name="Taylor P."/>
            <person name="Wei Y."/>
            <person name="Botstein D."/>
            <person name="Davis R.W."/>
        </authorList>
    </citation>
    <scope>NUCLEOTIDE SEQUENCE [LARGE SCALE GENOMIC DNA]</scope>
    <source>
        <strain>ATCC 204508 / S288c</strain>
    </source>
</reference>
<reference key="3">
    <citation type="journal article" date="2014" name="G3 (Bethesda)">
        <title>The reference genome sequence of Saccharomyces cerevisiae: Then and now.</title>
        <authorList>
            <person name="Engel S.R."/>
            <person name="Dietrich F.S."/>
            <person name="Fisk D.G."/>
            <person name="Binkley G."/>
            <person name="Balakrishnan R."/>
            <person name="Costanzo M.C."/>
            <person name="Dwight S.S."/>
            <person name="Hitz B.C."/>
            <person name="Karra K."/>
            <person name="Nash R.S."/>
            <person name="Weng S."/>
            <person name="Wong E.D."/>
            <person name="Lloyd P."/>
            <person name="Skrzypek M.S."/>
            <person name="Miyasato S.R."/>
            <person name="Simison M."/>
            <person name="Cherry J.M."/>
        </authorList>
    </citation>
    <scope>GENOME REANNOTATION</scope>
    <source>
        <strain>ATCC 204508 / S288c</strain>
    </source>
</reference>
<reference key="4">
    <citation type="journal article" date="2003" name="Nature">
        <title>Global analysis of protein localization in budding yeast.</title>
        <authorList>
            <person name="Huh W.-K."/>
            <person name="Falvo J.V."/>
            <person name="Gerke L.C."/>
            <person name="Carroll A.S."/>
            <person name="Howson R.W."/>
            <person name="Weissman J.S."/>
            <person name="O'Shea E.K."/>
        </authorList>
    </citation>
    <scope>SUBCELLULAR LOCATION [LARGE SCALE ANALYSIS]</scope>
</reference>
<reference key="5">
    <citation type="journal article" date="2003" name="Nature">
        <title>Global analysis of protein expression in yeast.</title>
        <authorList>
            <person name="Ghaemmaghami S."/>
            <person name="Huh W.-K."/>
            <person name="Bower K."/>
            <person name="Howson R.W."/>
            <person name="Belle A."/>
            <person name="Dephoure N."/>
            <person name="O'Shea E.K."/>
            <person name="Weissman J.S."/>
        </authorList>
    </citation>
    <scope>LEVEL OF PROTEIN EXPRESSION [LARGE SCALE ANALYSIS]</scope>
</reference>
<reference key="6">
    <citation type="journal article" date="2003" name="Mol. Cell">
        <title>Involvement of actin-related proteins in ATP-dependent chromatin remodeling.</title>
        <authorList>
            <person name="Shen X."/>
            <person name="Ranallo R."/>
            <person name="Choi E."/>
            <person name="Wu C."/>
        </authorList>
    </citation>
    <scope>IDENTIFICATION IN THE INO80 COMPLEX</scope>
</reference>
<reference key="7">
    <citation type="journal article" date="2008" name="Mol. Cell. Proteomics">
        <title>A multidimensional chromatography technology for in-depth phosphoproteome analysis.</title>
        <authorList>
            <person name="Albuquerque C.P."/>
            <person name="Smolka M.B."/>
            <person name="Payne S.H."/>
            <person name="Bafna V."/>
            <person name="Eng J."/>
            <person name="Zhou H."/>
        </authorList>
    </citation>
    <scope>PHOSPHORYLATION [LARGE SCALE ANALYSIS] AT THR-124</scope>
    <scope>IDENTIFICATION BY MASS SPECTROMETRY [LARGE SCALE ANALYSIS]</scope>
</reference>
<reference key="8">
    <citation type="journal article" date="2009" name="Science">
        <title>Global analysis of Cdk1 substrate phosphorylation sites provides insights into evolution.</title>
        <authorList>
            <person name="Holt L.J."/>
            <person name="Tuch B.B."/>
            <person name="Villen J."/>
            <person name="Johnson A.D."/>
            <person name="Gygi S.P."/>
            <person name="Morgan D.O."/>
        </authorList>
    </citation>
    <scope>PHOSPHORYLATION [LARGE SCALE ANALYSIS] AT THR-124</scope>
    <scope>IDENTIFICATION BY MASS SPECTROMETRY [LARGE SCALE ANALYSIS]</scope>
</reference>
<reference key="9">
    <citation type="journal article" date="2012" name="Proc. Natl. Acad. Sci. U.S.A.">
        <title>N-terminal acetylome analyses and functional insights of the N-terminal acetyltransferase NatB.</title>
        <authorList>
            <person name="Van Damme P."/>
            <person name="Lasa M."/>
            <person name="Polevoda B."/>
            <person name="Gazquez C."/>
            <person name="Elosegui-Artola A."/>
            <person name="Kim D.S."/>
            <person name="De Juan-Pardo E."/>
            <person name="Demeyer K."/>
            <person name="Hole K."/>
            <person name="Larrea E."/>
            <person name="Timmerman E."/>
            <person name="Prieto J."/>
            <person name="Arnesen T."/>
            <person name="Sherman F."/>
            <person name="Gevaert K."/>
            <person name="Aldabe R."/>
        </authorList>
    </citation>
    <scope>IDENTIFICATION BY MASS SPECTROMETRY [LARGE SCALE ANALYSIS]</scope>
</reference>
<gene>
    <name type="primary">IES5</name>
    <name type="ordered locus">YER092W</name>
</gene>
<feature type="chain" id="PRO_0000084157" description="Ino eighty subunit 5">
    <location>
        <begin position="1"/>
        <end position="125"/>
    </location>
</feature>
<feature type="modified residue" description="Phosphothreonine" evidence="4 5">
    <location>
        <position position="124"/>
    </location>
</feature>
<sequence length="125" mass="14312">MPSKDPESVIDKEIRKISARNDELIKQDGTLKREYTTLLRKVSSVITVLNSIDDADTGSAETELPRLISQATVEKVPELKWYNDQISLITEKLEDDEDIEVPEELMDAYTLYKETPLLYNDTHTP</sequence>
<evidence type="ECO:0000269" key="1">
    <source>
    </source>
</evidence>
<evidence type="ECO:0000269" key="2">
    <source>
    </source>
</evidence>
<evidence type="ECO:0000269" key="3">
    <source>
    </source>
</evidence>
<evidence type="ECO:0007744" key="4">
    <source>
    </source>
</evidence>
<evidence type="ECO:0007744" key="5">
    <source>
    </source>
</evidence>
<protein>
    <recommendedName>
        <fullName>Ino eighty subunit 5</fullName>
    </recommendedName>
</protein>